<sequence>MIFFFIIKKLKTIKASFIKSFFIKDIDESLETEQINFYLKRIINLEGYYYGNYDLTTIKEKYYTLIINNAFIENEIVPDLIEKH</sequence>
<organism>
    <name type="scientific">Rickettsia prowazekii (strain Madrid E)</name>
    <dbReference type="NCBI Taxonomy" id="272947"/>
    <lineage>
        <taxon>Bacteria</taxon>
        <taxon>Pseudomonadati</taxon>
        <taxon>Pseudomonadota</taxon>
        <taxon>Alphaproteobacteria</taxon>
        <taxon>Rickettsiales</taxon>
        <taxon>Rickettsiaceae</taxon>
        <taxon>Rickettsieae</taxon>
        <taxon>Rickettsia</taxon>
        <taxon>typhus group</taxon>
    </lineage>
</organism>
<gene>
    <name type="ordered locus">RP061</name>
</gene>
<accession>Q9ZE85</accession>
<feature type="chain" id="PRO_0000101307" description="Uncharacterized protein RP061">
    <location>
        <begin position="1"/>
        <end position="84"/>
    </location>
</feature>
<dbReference type="EMBL" id="AJ235270">
    <property type="protein sequence ID" value="CAA14532.1"/>
    <property type="molecule type" value="Genomic_DNA"/>
</dbReference>
<dbReference type="PIR" id="E71714">
    <property type="entry name" value="E71714"/>
</dbReference>
<dbReference type="RefSeq" id="NP_220455.1">
    <property type="nucleotide sequence ID" value="NC_000963.1"/>
</dbReference>
<dbReference type="STRING" id="272947.gene:17555144"/>
<dbReference type="EnsemblBacteria" id="CAA14532">
    <property type="protein sequence ID" value="CAA14532"/>
    <property type="gene ID" value="CAA14532"/>
</dbReference>
<dbReference type="KEGG" id="rpr:RP061"/>
<dbReference type="PATRIC" id="fig|272947.5.peg.62"/>
<dbReference type="HOGENOM" id="CLU_177035_0_0_5"/>
<dbReference type="OrthoDB" id="7160888at2"/>
<dbReference type="Proteomes" id="UP000002480">
    <property type="component" value="Chromosome"/>
</dbReference>
<dbReference type="InterPro" id="IPR022718">
    <property type="entry name" value="DUF2672"/>
</dbReference>
<dbReference type="Pfam" id="PF10878">
    <property type="entry name" value="DUF2672"/>
    <property type="match status" value="1"/>
</dbReference>
<proteinExistence type="predicted"/>
<name>Y061_RICPR</name>
<keyword id="KW-1185">Reference proteome</keyword>
<reference key="1">
    <citation type="journal article" date="1998" name="Nature">
        <title>The genome sequence of Rickettsia prowazekii and the origin of mitochondria.</title>
        <authorList>
            <person name="Andersson S.G.E."/>
            <person name="Zomorodipour A."/>
            <person name="Andersson J.O."/>
            <person name="Sicheritz-Ponten T."/>
            <person name="Alsmark U.C.M."/>
            <person name="Podowski R.M."/>
            <person name="Naeslund A.K."/>
            <person name="Eriksson A.-S."/>
            <person name="Winkler H.H."/>
            <person name="Kurland C.G."/>
        </authorList>
    </citation>
    <scope>NUCLEOTIDE SEQUENCE [LARGE SCALE GENOMIC DNA]</scope>
    <source>
        <strain>Madrid E</strain>
    </source>
</reference>
<protein>
    <recommendedName>
        <fullName>Uncharacterized protein RP061</fullName>
    </recommendedName>
</protein>